<accession>Q88NJ4</accession>
<sequence length="591" mass="66568">MMRSHYCGQLNESLDGQEVTLCGWVHRRRDHGGVIFLDIRDREGMAQVVFDPDRAETFAAADRVRSEYVVQITGKVRKRPEGAVNANMASGAIEILGYQLNVLNEAETPPFPLNEYSDVGEETRLRYRFIDLRRPEMADKLRLRSRITSSIRRFLDENGFLDVETPILTRATPEGARDYLVPSRTHAGSFFALPQSPQLFKQLLMVAGFDRYYQIAKCFRDEDLRADRQPEFTQIDIETSFLDESEIMGLTESMIRKLFKEVLDLEFGEFPHMTFEEAMRRYGSDKPDLRIPLELVDVADQLKDVDFKVFAGPANDPKCRVTALRLPGGASMPRSKIDEYTKFVGIYGAKGLAYIKVNERAKGVEGLQSPIVKNIPEANLNNILDRVGAVDGDIVFFGADKFKVVSEALGALRIRLGHDFELLTCEWAPMWVVDFPMFEENEDGSFTALHHPFTAPKCTPEELEANPATALSRAYDMVLNGTELGGGSIRIHRKEMQQAVFRLLGIEAEEQEEKFGFLLDALKFGAPPHGGLAFGLDRLVMLMTGAQSIREVIAFPKTQSAACVMTQAPGMVDAKALRELHIRLREQTKVE</sequence>
<feature type="chain" id="PRO_0000110925" description="Aspartate--tRNA(Asp/Asn) ligase">
    <location>
        <begin position="1"/>
        <end position="591"/>
    </location>
</feature>
<feature type="region of interest" description="Aspartate" evidence="1">
    <location>
        <begin position="198"/>
        <end position="201"/>
    </location>
</feature>
<feature type="binding site" evidence="1">
    <location>
        <position position="174"/>
    </location>
    <ligand>
        <name>L-aspartate</name>
        <dbReference type="ChEBI" id="CHEBI:29991"/>
    </ligand>
</feature>
<feature type="binding site" evidence="1">
    <location>
        <begin position="220"/>
        <end position="222"/>
    </location>
    <ligand>
        <name>ATP</name>
        <dbReference type="ChEBI" id="CHEBI:30616"/>
    </ligand>
</feature>
<feature type="binding site" evidence="1">
    <location>
        <position position="220"/>
    </location>
    <ligand>
        <name>L-aspartate</name>
        <dbReference type="ChEBI" id="CHEBI:29991"/>
    </ligand>
</feature>
<feature type="binding site" evidence="1">
    <location>
        <position position="229"/>
    </location>
    <ligand>
        <name>ATP</name>
        <dbReference type="ChEBI" id="CHEBI:30616"/>
    </ligand>
</feature>
<feature type="binding site" evidence="1">
    <location>
        <position position="450"/>
    </location>
    <ligand>
        <name>L-aspartate</name>
        <dbReference type="ChEBI" id="CHEBI:29991"/>
    </ligand>
</feature>
<feature type="binding site" evidence="1">
    <location>
        <position position="483"/>
    </location>
    <ligand>
        <name>ATP</name>
        <dbReference type="ChEBI" id="CHEBI:30616"/>
    </ligand>
</feature>
<feature type="binding site" evidence="1">
    <location>
        <position position="490"/>
    </location>
    <ligand>
        <name>L-aspartate</name>
        <dbReference type="ChEBI" id="CHEBI:29991"/>
    </ligand>
</feature>
<feature type="binding site" evidence="1">
    <location>
        <begin position="535"/>
        <end position="538"/>
    </location>
    <ligand>
        <name>ATP</name>
        <dbReference type="ChEBI" id="CHEBI:30616"/>
    </ligand>
</feature>
<feature type="site" description="Important for tRNA non-discrimination" evidence="1">
    <location>
        <position position="31"/>
    </location>
</feature>
<feature type="site" description="Important for tRNA non-discrimination" evidence="1">
    <location>
        <position position="82"/>
    </location>
</feature>
<organism>
    <name type="scientific">Pseudomonas putida (strain ATCC 47054 / DSM 6125 / CFBP 8728 / NCIMB 11950 / KT2440)</name>
    <dbReference type="NCBI Taxonomy" id="160488"/>
    <lineage>
        <taxon>Bacteria</taxon>
        <taxon>Pseudomonadati</taxon>
        <taxon>Pseudomonadota</taxon>
        <taxon>Gammaproteobacteria</taxon>
        <taxon>Pseudomonadales</taxon>
        <taxon>Pseudomonadaceae</taxon>
        <taxon>Pseudomonas</taxon>
    </lineage>
</organism>
<comment type="function">
    <text evidence="1">Aspartyl-tRNA synthetase with relaxed tRNA specificity since it is able to aspartylate not only its cognate tRNA(Asp) but also tRNA(Asn). Reaction proceeds in two steps: L-aspartate is first activated by ATP to form Asp-AMP and then transferred to the acceptor end of tRNA(Asp/Asn).</text>
</comment>
<comment type="catalytic activity">
    <reaction evidence="1">
        <text>tRNA(Asx) + L-aspartate + ATP = L-aspartyl-tRNA(Asx) + AMP + diphosphate</text>
        <dbReference type="Rhea" id="RHEA:18349"/>
        <dbReference type="Rhea" id="RHEA-COMP:9710"/>
        <dbReference type="Rhea" id="RHEA-COMP:9711"/>
        <dbReference type="ChEBI" id="CHEBI:29991"/>
        <dbReference type="ChEBI" id="CHEBI:30616"/>
        <dbReference type="ChEBI" id="CHEBI:33019"/>
        <dbReference type="ChEBI" id="CHEBI:78442"/>
        <dbReference type="ChEBI" id="CHEBI:78516"/>
        <dbReference type="ChEBI" id="CHEBI:456215"/>
        <dbReference type="EC" id="6.1.1.23"/>
    </reaction>
</comment>
<comment type="subunit">
    <text evidence="1">Homodimer.</text>
</comment>
<comment type="subcellular location">
    <subcellularLocation>
        <location evidence="1">Cytoplasm</location>
    </subcellularLocation>
</comment>
<comment type="similarity">
    <text evidence="1">Belongs to the class-II aminoacyl-tRNA synthetase family. Type 1 subfamily.</text>
</comment>
<name>SYDND_PSEPK</name>
<protein>
    <recommendedName>
        <fullName evidence="1">Aspartate--tRNA(Asp/Asn) ligase</fullName>
        <ecNumber evidence="1">6.1.1.23</ecNumber>
    </recommendedName>
    <alternativeName>
        <fullName evidence="1">Aspartyl-tRNA synthetase</fullName>
        <shortName evidence="1">AspRS</shortName>
    </alternativeName>
    <alternativeName>
        <fullName evidence="1">Non-discriminating aspartyl-tRNA synthetase</fullName>
        <shortName evidence="1">ND-AspRS</shortName>
    </alternativeName>
</protein>
<keyword id="KW-0030">Aminoacyl-tRNA synthetase</keyword>
<keyword id="KW-0067">ATP-binding</keyword>
<keyword id="KW-0963">Cytoplasm</keyword>
<keyword id="KW-0436">Ligase</keyword>
<keyword id="KW-0547">Nucleotide-binding</keyword>
<keyword id="KW-0648">Protein biosynthesis</keyword>
<keyword id="KW-1185">Reference proteome</keyword>
<gene>
    <name evidence="1" type="primary">aspS</name>
    <name type="ordered locus">PP_1213</name>
</gene>
<reference key="1">
    <citation type="journal article" date="2002" name="Environ. Microbiol.">
        <title>Complete genome sequence and comparative analysis of the metabolically versatile Pseudomonas putida KT2440.</title>
        <authorList>
            <person name="Nelson K.E."/>
            <person name="Weinel C."/>
            <person name="Paulsen I.T."/>
            <person name="Dodson R.J."/>
            <person name="Hilbert H."/>
            <person name="Martins dos Santos V.A.P."/>
            <person name="Fouts D.E."/>
            <person name="Gill S.R."/>
            <person name="Pop M."/>
            <person name="Holmes M."/>
            <person name="Brinkac L.M."/>
            <person name="Beanan M.J."/>
            <person name="DeBoy R.T."/>
            <person name="Daugherty S.C."/>
            <person name="Kolonay J.F."/>
            <person name="Madupu R."/>
            <person name="Nelson W.C."/>
            <person name="White O."/>
            <person name="Peterson J.D."/>
            <person name="Khouri H.M."/>
            <person name="Hance I."/>
            <person name="Chris Lee P."/>
            <person name="Holtzapple E.K."/>
            <person name="Scanlan D."/>
            <person name="Tran K."/>
            <person name="Moazzez A."/>
            <person name="Utterback T.R."/>
            <person name="Rizzo M."/>
            <person name="Lee K."/>
            <person name="Kosack D."/>
            <person name="Moestl D."/>
            <person name="Wedler H."/>
            <person name="Lauber J."/>
            <person name="Stjepandic D."/>
            <person name="Hoheisel J."/>
            <person name="Straetz M."/>
            <person name="Heim S."/>
            <person name="Kiewitz C."/>
            <person name="Eisen J.A."/>
            <person name="Timmis K.N."/>
            <person name="Duesterhoeft A."/>
            <person name="Tuemmler B."/>
            <person name="Fraser C.M."/>
        </authorList>
    </citation>
    <scope>NUCLEOTIDE SEQUENCE [LARGE SCALE GENOMIC DNA]</scope>
    <source>
        <strain>ATCC 47054 / DSM 6125 / CFBP 8728 / NCIMB 11950 / KT2440</strain>
    </source>
</reference>
<evidence type="ECO:0000255" key="1">
    <source>
        <dbReference type="HAMAP-Rule" id="MF_00044"/>
    </source>
</evidence>
<proteinExistence type="inferred from homology"/>
<dbReference type="EC" id="6.1.1.23" evidence="1"/>
<dbReference type="EMBL" id="AE015451">
    <property type="protein sequence ID" value="AAN66837.1"/>
    <property type="molecule type" value="Genomic_DNA"/>
</dbReference>
<dbReference type="RefSeq" id="NP_743373.1">
    <property type="nucleotide sequence ID" value="NC_002947.4"/>
</dbReference>
<dbReference type="RefSeq" id="WP_004575741.1">
    <property type="nucleotide sequence ID" value="NZ_CP169744.1"/>
</dbReference>
<dbReference type="SMR" id="Q88NJ4"/>
<dbReference type="STRING" id="160488.PP_1213"/>
<dbReference type="PaxDb" id="160488-PP_1213"/>
<dbReference type="GeneID" id="83678579"/>
<dbReference type="KEGG" id="ppu:PP_1213"/>
<dbReference type="PATRIC" id="fig|160488.4.peg.1289"/>
<dbReference type="eggNOG" id="COG0173">
    <property type="taxonomic scope" value="Bacteria"/>
</dbReference>
<dbReference type="HOGENOM" id="CLU_014330_3_2_6"/>
<dbReference type="OrthoDB" id="9802326at2"/>
<dbReference type="PhylomeDB" id="Q88NJ4"/>
<dbReference type="BioCyc" id="PPUT160488:G1G01-1298-MONOMER"/>
<dbReference type="Proteomes" id="UP000000556">
    <property type="component" value="Chromosome"/>
</dbReference>
<dbReference type="GO" id="GO:0005737">
    <property type="term" value="C:cytoplasm"/>
    <property type="evidence" value="ECO:0007669"/>
    <property type="project" value="UniProtKB-SubCell"/>
</dbReference>
<dbReference type="GO" id="GO:0004815">
    <property type="term" value="F:aspartate-tRNA ligase activity"/>
    <property type="evidence" value="ECO:0007669"/>
    <property type="project" value="UniProtKB-UniRule"/>
</dbReference>
<dbReference type="GO" id="GO:0050560">
    <property type="term" value="F:aspartate-tRNA(Asn) ligase activity"/>
    <property type="evidence" value="ECO:0007669"/>
    <property type="project" value="UniProtKB-EC"/>
</dbReference>
<dbReference type="GO" id="GO:0005524">
    <property type="term" value="F:ATP binding"/>
    <property type="evidence" value="ECO:0007669"/>
    <property type="project" value="UniProtKB-UniRule"/>
</dbReference>
<dbReference type="GO" id="GO:0003676">
    <property type="term" value="F:nucleic acid binding"/>
    <property type="evidence" value="ECO:0007669"/>
    <property type="project" value="InterPro"/>
</dbReference>
<dbReference type="GO" id="GO:0006422">
    <property type="term" value="P:aspartyl-tRNA aminoacylation"/>
    <property type="evidence" value="ECO:0007669"/>
    <property type="project" value="UniProtKB-UniRule"/>
</dbReference>
<dbReference type="CDD" id="cd00777">
    <property type="entry name" value="AspRS_core"/>
    <property type="match status" value="1"/>
</dbReference>
<dbReference type="CDD" id="cd04317">
    <property type="entry name" value="EcAspRS_like_N"/>
    <property type="match status" value="1"/>
</dbReference>
<dbReference type="Gene3D" id="3.30.930.10">
    <property type="entry name" value="Bira Bifunctional Protein, Domain 2"/>
    <property type="match status" value="1"/>
</dbReference>
<dbReference type="Gene3D" id="3.30.1360.30">
    <property type="entry name" value="GAD-like domain"/>
    <property type="match status" value="1"/>
</dbReference>
<dbReference type="Gene3D" id="2.40.50.140">
    <property type="entry name" value="Nucleic acid-binding proteins"/>
    <property type="match status" value="1"/>
</dbReference>
<dbReference type="HAMAP" id="MF_00044">
    <property type="entry name" value="Asp_tRNA_synth_type1"/>
    <property type="match status" value="1"/>
</dbReference>
<dbReference type="InterPro" id="IPR004364">
    <property type="entry name" value="Aa-tRNA-synt_II"/>
</dbReference>
<dbReference type="InterPro" id="IPR006195">
    <property type="entry name" value="aa-tRNA-synth_II"/>
</dbReference>
<dbReference type="InterPro" id="IPR045864">
    <property type="entry name" value="aa-tRNA-synth_II/BPL/LPL"/>
</dbReference>
<dbReference type="InterPro" id="IPR004524">
    <property type="entry name" value="Asp-tRNA-ligase_1"/>
</dbReference>
<dbReference type="InterPro" id="IPR047089">
    <property type="entry name" value="Asp-tRNA-ligase_1_N"/>
</dbReference>
<dbReference type="InterPro" id="IPR002312">
    <property type="entry name" value="Asp/Asn-tRNA-synth_IIb"/>
</dbReference>
<dbReference type="InterPro" id="IPR047090">
    <property type="entry name" value="AspRS_core"/>
</dbReference>
<dbReference type="InterPro" id="IPR004115">
    <property type="entry name" value="GAD-like_sf"/>
</dbReference>
<dbReference type="InterPro" id="IPR029351">
    <property type="entry name" value="GAD_dom"/>
</dbReference>
<dbReference type="InterPro" id="IPR012340">
    <property type="entry name" value="NA-bd_OB-fold"/>
</dbReference>
<dbReference type="InterPro" id="IPR004365">
    <property type="entry name" value="NA-bd_OB_tRNA"/>
</dbReference>
<dbReference type="NCBIfam" id="TIGR00459">
    <property type="entry name" value="aspS_bact"/>
    <property type="match status" value="1"/>
</dbReference>
<dbReference type="NCBIfam" id="NF001750">
    <property type="entry name" value="PRK00476.1"/>
    <property type="match status" value="1"/>
</dbReference>
<dbReference type="PANTHER" id="PTHR22594:SF5">
    <property type="entry name" value="ASPARTATE--TRNA LIGASE, MITOCHONDRIAL"/>
    <property type="match status" value="1"/>
</dbReference>
<dbReference type="PANTHER" id="PTHR22594">
    <property type="entry name" value="ASPARTYL/LYSYL-TRNA SYNTHETASE"/>
    <property type="match status" value="1"/>
</dbReference>
<dbReference type="Pfam" id="PF02938">
    <property type="entry name" value="GAD"/>
    <property type="match status" value="1"/>
</dbReference>
<dbReference type="Pfam" id="PF00152">
    <property type="entry name" value="tRNA-synt_2"/>
    <property type="match status" value="1"/>
</dbReference>
<dbReference type="Pfam" id="PF01336">
    <property type="entry name" value="tRNA_anti-codon"/>
    <property type="match status" value="1"/>
</dbReference>
<dbReference type="PRINTS" id="PR01042">
    <property type="entry name" value="TRNASYNTHASP"/>
</dbReference>
<dbReference type="SUPFAM" id="SSF55681">
    <property type="entry name" value="Class II aaRS and biotin synthetases"/>
    <property type="match status" value="1"/>
</dbReference>
<dbReference type="SUPFAM" id="SSF55261">
    <property type="entry name" value="GAD domain-like"/>
    <property type="match status" value="1"/>
</dbReference>
<dbReference type="SUPFAM" id="SSF50249">
    <property type="entry name" value="Nucleic acid-binding proteins"/>
    <property type="match status" value="1"/>
</dbReference>
<dbReference type="PROSITE" id="PS50862">
    <property type="entry name" value="AA_TRNA_LIGASE_II"/>
    <property type="match status" value="1"/>
</dbReference>